<keyword id="KW-0521">NADP</keyword>
<keyword id="KW-0560">Oxidoreductase</keyword>
<keyword id="KW-0627">Porphyrin biosynthesis</keyword>
<keyword id="KW-1185">Reference proteome</keyword>
<proteinExistence type="inferred from homology"/>
<sequence length="411" mass="47552">MNLAVIGINYNNTPIDIREKVSFSKSQKYKACTYLIKKGISEIIIVSTCNRSEIYICSDEIDSHINEVVNFYKIFFNVESVNEYIFIKKDKEAVSHIYNVSAGLDSMILGEDQILGQVKEALRYSMENKFSRKVLNKLFREAITSAKKIKSELKISETPISMVYIAIKLLEKNIGTLKGKKACIIGAGDMGRLALKHLINEELEEIFVANRTYNNVIDLLKEFPKIKLIDYEKKYEILDNVDILITATAAPHLIIKKEQLQNIKQELYIMDLALPRDVEKSAGDIENIHLYDVDDFKNISDSNKIKREELSLIAKDSIDSYVNEFNQWMKSLKVDNTIKDLNNRCRDIKDEYLGYITKKIDLNERDKEILEKMLFGALKKVVKEPILNLKELKDEDEINKYIKSVNELFKF</sequence>
<protein>
    <recommendedName>
        <fullName evidence="1">Glutamyl-tRNA reductase</fullName>
        <shortName evidence="1">GluTR</shortName>
        <ecNumber evidence="1">1.2.1.70</ecNumber>
    </recommendedName>
</protein>
<gene>
    <name evidence="1" type="primary">hemA</name>
    <name type="ordered locus">NT01CX_0264</name>
</gene>
<dbReference type="EC" id="1.2.1.70" evidence="1"/>
<dbReference type="EMBL" id="CP000382">
    <property type="protein sequence ID" value="ABK60902.1"/>
    <property type="molecule type" value="Genomic_DNA"/>
</dbReference>
<dbReference type="RefSeq" id="WP_011722752.1">
    <property type="nucleotide sequence ID" value="NC_008593.1"/>
</dbReference>
<dbReference type="SMR" id="A0Q2B3"/>
<dbReference type="STRING" id="386415.NT01CX_0264"/>
<dbReference type="KEGG" id="cno:NT01CX_0264"/>
<dbReference type="eggNOG" id="COG0373">
    <property type="taxonomic scope" value="Bacteria"/>
</dbReference>
<dbReference type="HOGENOM" id="CLU_035113_1_0_9"/>
<dbReference type="UniPathway" id="UPA00251">
    <property type="reaction ID" value="UER00316"/>
</dbReference>
<dbReference type="Proteomes" id="UP000008220">
    <property type="component" value="Chromosome"/>
</dbReference>
<dbReference type="GO" id="GO:0008883">
    <property type="term" value="F:glutamyl-tRNA reductase activity"/>
    <property type="evidence" value="ECO:0007669"/>
    <property type="project" value="UniProtKB-UniRule"/>
</dbReference>
<dbReference type="GO" id="GO:0050661">
    <property type="term" value="F:NADP binding"/>
    <property type="evidence" value="ECO:0007669"/>
    <property type="project" value="InterPro"/>
</dbReference>
<dbReference type="GO" id="GO:0019353">
    <property type="term" value="P:protoporphyrinogen IX biosynthetic process from glutamate"/>
    <property type="evidence" value="ECO:0007669"/>
    <property type="project" value="TreeGrafter"/>
</dbReference>
<dbReference type="CDD" id="cd05213">
    <property type="entry name" value="NAD_bind_Glutamyl_tRNA_reduct"/>
    <property type="match status" value="1"/>
</dbReference>
<dbReference type="FunFam" id="3.30.460.30:FF:000001">
    <property type="entry name" value="Glutamyl-tRNA reductase"/>
    <property type="match status" value="1"/>
</dbReference>
<dbReference type="FunFam" id="3.40.50.720:FF:000031">
    <property type="entry name" value="Glutamyl-tRNA reductase"/>
    <property type="match status" value="1"/>
</dbReference>
<dbReference type="Gene3D" id="3.30.460.30">
    <property type="entry name" value="Glutamyl-tRNA reductase, N-terminal domain"/>
    <property type="match status" value="1"/>
</dbReference>
<dbReference type="Gene3D" id="3.40.50.720">
    <property type="entry name" value="NAD(P)-binding Rossmann-like Domain"/>
    <property type="match status" value="1"/>
</dbReference>
<dbReference type="HAMAP" id="MF_00087">
    <property type="entry name" value="Glu_tRNA_reductase"/>
    <property type="match status" value="1"/>
</dbReference>
<dbReference type="InterPro" id="IPR000343">
    <property type="entry name" value="4pyrrol_synth_GluRdtase"/>
</dbReference>
<dbReference type="InterPro" id="IPR015896">
    <property type="entry name" value="4pyrrol_synth_GluRdtase_dimer"/>
</dbReference>
<dbReference type="InterPro" id="IPR015895">
    <property type="entry name" value="4pyrrol_synth_GluRdtase_N"/>
</dbReference>
<dbReference type="InterPro" id="IPR018214">
    <property type="entry name" value="GluRdtase_CS"/>
</dbReference>
<dbReference type="InterPro" id="IPR036453">
    <property type="entry name" value="GluRdtase_dimer_dom_sf"/>
</dbReference>
<dbReference type="InterPro" id="IPR036343">
    <property type="entry name" value="GluRdtase_N_sf"/>
</dbReference>
<dbReference type="InterPro" id="IPR036291">
    <property type="entry name" value="NAD(P)-bd_dom_sf"/>
</dbReference>
<dbReference type="InterPro" id="IPR006151">
    <property type="entry name" value="Shikm_DH/Glu-tRNA_Rdtase"/>
</dbReference>
<dbReference type="NCBIfam" id="TIGR01035">
    <property type="entry name" value="hemA"/>
    <property type="match status" value="1"/>
</dbReference>
<dbReference type="PANTHER" id="PTHR43013">
    <property type="entry name" value="GLUTAMYL-TRNA REDUCTASE"/>
    <property type="match status" value="1"/>
</dbReference>
<dbReference type="PANTHER" id="PTHR43013:SF1">
    <property type="entry name" value="GLUTAMYL-TRNA REDUCTASE"/>
    <property type="match status" value="1"/>
</dbReference>
<dbReference type="Pfam" id="PF00745">
    <property type="entry name" value="GlutR_dimer"/>
    <property type="match status" value="1"/>
</dbReference>
<dbReference type="Pfam" id="PF05201">
    <property type="entry name" value="GlutR_N"/>
    <property type="match status" value="1"/>
</dbReference>
<dbReference type="Pfam" id="PF01488">
    <property type="entry name" value="Shikimate_DH"/>
    <property type="match status" value="1"/>
</dbReference>
<dbReference type="PIRSF" id="PIRSF000445">
    <property type="entry name" value="4pyrrol_synth_GluRdtase"/>
    <property type="match status" value="1"/>
</dbReference>
<dbReference type="SUPFAM" id="SSF69742">
    <property type="entry name" value="Glutamyl tRNA-reductase catalytic, N-terminal domain"/>
    <property type="match status" value="1"/>
</dbReference>
<dbReference type="SUPFAM" id="SSF69075">
    <property type="entry name" value="Glutamyl tRNA-reductase dimerization domain"/>
    <property type="match status" value="1"/>
</dbReference>
<dbReference type="SUPFAM" id="SSF51735">
    <property type="entry name" value="NAD(P)-binding Rossmann-fold domains"/>
    <property type="match status" value="1"/>
</dbReference>
<dbReference type="PROSITE" id="PS00747">
    <property type="entry name" value="GLUTR"/>
    <property type="match status" value="1"/>
</dbReference>
<comment type="function">
    <text evidence="1">Catalyzes the NADPH-dependent reduction of glutamyl-tRNA(Glu) to glutamate 1-semialdehyde (GSA).</text>
</comment>
<comment type="catalytic activity">
    <reaction evidence="1">
        <text>(S)-4-amino-5-oxopentanoate + tRNA(Glu) + NADP(+) = L-glutamyl-tRNA(Glu) + NADPH + H(+)</text>
        <dbReference type="Rhea" id="RHEA:12344"/>
        <dbReference type="Rhea" id="RHEA-COMP:9663"/>
        <dbReference type="Rhea" id="RHEA-COMP:9680"/>
        <dbReference type="ChEBI" id="CHEBI:15378"/>
        <dbReference type="ChEBI" id="CHEBI:57501"/>
        <dbReference type="ChEBI" id="CHEBI:57783"/>
        <dbReference type="ChEBI" id="CHEBI:58349"/>
        <dbReference type="ChEBI" id="CHEBI:78442"/>
        <dbReference type="ChEBI" id="CHEBI:78520"/>
        <dbReference type="EC" id="1.2.1.70"/>
    </reaction>
</comment>
<comment type="pathway">
    <text evidence="1">Porphyrin-containing compound metabolism; protoporphyrin-IX biosynthesis; 5-aminolevulinate from L-glutamyl-tRNA(Glu): step 1/2.</text>
</comment>
<comment type="subunit">
    <text evidence="1">Homodimer.</text>
</comment>
<comment type="domain">
    <text evidence="1">Possesses an unusual extended V-shaped dimeric structure with each monomer consisting of three distinct domains arranged along a curved 'spinal' alpha-helix. The N-terminal catalytic domain specifically recognizes the glutamate moiety of the substrate. The second domain is the NADPH-binding domain, and the third C-terminal domain is responsible for dimerization.</text>
</comment>
<comment type="miscellaneous">
    <text evidence="1">During catalysis, the active site Cys acts as a nucleophile attacking the alpha-carbonyl group of tRNA-bound glutamate with the formation of a thioester intermediate between enzyme and glutamate, and the concomitant release of tRNA(Glu). The thioester intermediate is finally reduced by direct hydride transfer from NADPH, to form the product GSA.</text>
</comment>
<comment type="similarity">
    <text evidence="1">Belongs to the glutamyl-tRNA reductase family.</text>
</comment>
<evidence type="ECO:0000255" key="1">
    <source>
        <dbReference type="HAMAP-Rule" id="MF_00087"/>
    </source>
</evidence>
<name>HEM1_CLONN</name>
<reference key="1">
    <citation type="journal article" date="2006" name="Nat. Biotechnol.">
        <title>The genome and transcriptomes of the anti-tumor agent Clostridium novyi-NT.</title>
        <authorList>
            <person name="Bettegowda C."/>
            <person name="Huang X."/>
            <person name="Lin J."/>
            <person name="Cheong I."/>
            <person name="Kohli M."/>
            <person name="Szabo S.A."/>
            <person name="Zhang X."/>
            <person name="Diaz L.A. Jr."/>
            <person name="Velculescu V.E."/>
            <person name="Parmigiani G."/>
            <person name="Kinzler K.W."/>
            <person name="Vogelstein B."/>
            <person name="Zhou S."/>
        </authorList>
    </citation>
    <scope>NUCLEOTIDE SEQUENCE [LARGE SCALE GENOMIC DNA]</scope>
    <source>
        <strain>NT</strain>
    </source>
</reference>
<accession>A0Q2B3</accession>
<organism>
    <name type="scientific">Clostridium novyi (strain NT)</name>
    <dbReference type="NCBI Taxonomy" id="386415"/>
    <lineage>
        <taxon>Bacteria</taxon>
        <taxon>Bacillati</taxon>
        <taxon>Bacillota</taxon>
        <taxon>Clostridia</taxon>
        <taxon>Eubacteriales</taxon>
        <taxon>Clostridiaceae</taxon>
        <taxon>Clostridium</taxon>
    </lineage>
</organism>
<feature type="chain" id="PRO_1000057573" description="Glutamyl-tRNA reductase">
    <location>
        <begin position="1"/>
        <end position="411"/>
    </location>
</feature>
<feature type="active site" description="Nucleophile" evidence="1">
    <location>
        <position position="49"/>
    </location>
</feature>
<feature type="binding site" evidence="1">
    <location>
        <begin position="48"/>
        <end position="51"/>
    </location>
    <ligand>
        <name>substrate</name>
    </ligand>
</feature>
<feature type="binding site" evidence="1">
    <location>
        <position position="106"/>
    </location>
    <ligand>
        <name>substrate</name>
    </ligand>
</feature>
<feature type="binding site" evidence="1">
    <location>
        <begin position="111"/>
        <end position="113"/>
    </location>
    <ligand>
        <name>substrate</name>
    </ligand>
</feature>
<feature type="binding site" evidence="1">
    <location>
        <position position="117"/>
    </location>
    <ligand>
        <name>substrate</name>
    </ligand>
</feature>
<feature type="binding site" evidence="1">
    <location>
        <begin position="186"/>
        <end position="191"/>
    </location>
    <ligand>
        <name>NADP(+)</name>
        <dbReference type="ChEBI" id="CHEBI:58349"/>
    </ligand>
</feature>
<feature type="site" description="Important for activity" evidence="1">
    <location>
        <position position="96"/>
    </location>
</feature>